<accession>Q7YRK2</accession>
<accession>Q53CG3</accession>
<gene>
    <name type="primary">COX6C</name>
</gene>
<keyword id="KW-0472">Membrane</keyword>
<keyword id="KW-0496">Mitochondrion</keyword>
<keyword id="KW-0999">Mitochondrion inner membrane</keyword>
<keyword id="KW-0812">Transmembrane</keyword>
<keyword id="KW-1133">Transmembrane helix</keyword>
<comment type="function">
    <text evidence="1">Component of the cytochrome c oxidase, the last enzyme in the mitochondrial electron transport chain which drives oxidative phosphorylation. The respiratory chain contains 3 multisubunit complexes succinate dehydrogenase (complex II, CII), ubiquinol-cytochrome c oxidoreductase (cytochrome b-c1 complex, complex III, CIII) and cytochrome c oxidase (complex IV, CIV), that cooperate to transfer electrons derived from NADH and succinate to molecular oxygen, creating an electrochemical gradient over the inner membrane that drives transmembrane transport and the ATP synthase. Cytochrome c oxidase is the component of the respiratory chain that catalyzes the reduction of oxygen to water. Electrons originating from reduced cytochrome c in the intermembrane space (IMS) are transferred via the dinuclear copper A center (CU(A)) of subunit 2 and heme A of subunit 1 to the active site in subunit 1, a binuclear center (BNC) formed by heme A3 and copper B (CU(B)). The BNC reduces molecular oxygen to 2 water molecules using 4 electrons from cytochrome c in the IMS and 4 protons from the mitochondrial matrix.</text>
</comment>
<comment type="pathway">
    <text evidence="1">Energy metabolism; oxidative phosphorylation.</text>
</comment>
<comment type="subunit">
    <text evidence="1">Component of the cytochrome c oxidase (complex IV, CIV), a multisubunit enzyme composed of 14 subunits. The complex is composed of a catalytic core of 3 subunits MT-CO1, MT-CO2 and MT-CO3, encoded in the mitochondrial DNA, and 11 supernumerary subunits COX4I, COX5A, COX5B, COX6A, COX6B, COX6C, COX7A, COX7B, COX7C, COX8 and NDUFA4, which are encoded in the nuclear genome. The complex exists as a monomer or a dimer and forms supercomplexes (SCs) in the inner mitochondrial membrane with NADH-ubiquinone oxidoreductase (complex I, CI) and ubiquinol-cytochrome c oxidoreductase (cytochrome b-c1 complex, complex III, CIII), resulting in different assemblies (supercomplex SCI(1)III(2)IV(1) and megacomplex MCI(2)III(2)IV(2)).</text>
</comment>
<comment type="subcellular location">
    <subcellularLocation>
        <location evidence="1">Mitochondrion inner membrane</location>
        <topology evidence="1">Single-pass membrane protein</topology>
    </subcellularLocation>
</comment>
<comment type="similarity">
    <text evidence="2">Belongs to the cytochrome c oxidase subunit 6c family.</text>
</comment>
<feature type="chain" id="PRO_0000006133" description="Cytochrome c oxidase subunit 6C">
    <location>
        <begin position="1"/>
        <end position="75"/>
    </location>
</feature>
<feature type="topological domain" description="Mitochondrial matrix" evidence="1">
    <location>
        <begin position="1"/>
        <end position="13"/>
    </location>
</feature>
<feature type="transmembrane region" description="Helical" evidence="1">
    <location>
        <begin position="14"/>
        <end position="54"/>
    </location>
</feature>
<feature type="topological domain" description="Mitochondrial intermembrane" evidence="1">
    <location>
        <begin position="55"/>
        <end position="75"/>
    </location>
</feature>
<name>COX6C_MACSL</name>
<organism>
    <name type="scientific">Macaca silenus</name>
    <name type="common">Lion-tailed macaque</name>
    <dbReference type="NCBI Taxonomy" id="54601"/>
    <lineage>
        <taxon>Eukaryota</taxon>
        <taxon>Metazoa</taxon>
        <taxon>Chordata</taxon>
        <taxon>Craniata</taxon>
        <taxon>Vertebrata</taxon>
        <taxon>Euteleostomi</taxon>
        <taxon>Mammalia</taxon>
        <taxon>Eutheria</taxon>
        <taxon>Euarchontoglires</taxon>
        <taxon>Primates</taxon>
        <taxon>Haplorrhini</taxon>
        <taxon>Catarrhini</taxon>
        <taxon>Cercopithecidae</taxon>
        <taxon>Cercopithecinae</taxon>
        <taxon>Macaca</taxon>
    </lineage>
</organism>
<evidence type="ECO:0000250" key="1">
    <source>
        <dbReference type="UniProtKB" id="P04038"/>
    </source>
</evidence>
<evidence type="ECO:0000305" key="2"/>
<proteinExistence type="inferred from homology"/>
<dbReference type="EMBL" id="AY236508">
    <property type="protein sequence ID" value="AAP43954.1"/>
    <property type="molecule type" value="mRNA"/>
</dbReference>
<dbReference type="EMBL" id="AY585855">
    <property type="protein sequence ID" value="AAW03184.1"/>
    <property type="molecule type" value="mRNA"/>
</dbReference>
<dbReference type="SMR" id="Q7YRK2"/>
<dbReference type="UniPathway" id="UPA00705"/>
<dbReference type="GO" id="GO:0005743">
    <property type="term" value="C:mitochondrial inner membrane"/>
    <property type="evidence" value="ECO:0007669"/>
    <property type="project" value="UniProtKB-SubCell"/>
</dbReference>
<dbReference type="GO" id="GO:0006119">
    <property type="term" value="P:oxidative phosphorylation"/>
    <property type="evidence" value="ECO:0007669"/>
    <property type="project" value="UniProtKB-UniPathway"/>
</dbReference>
<dbReference type="CDD" id="cd22901">
    <property type="entry name" value="CcO_VIc"/>
    <property type="match status" value="1"/>
</dbReference>
<dbReference type="FunFam" id="4.10.93.10:FF:000001">
    <property type="entry name" value="Cytochrome c oxidase subunit 6C"/>
    <property type="match status" value="1"/>
</dbReference>
<dbReference type="Gene3D" id="4.10.93.10">
    <property type="entry name" value="Mitochondrial cytochrome c oxidase subunit VIc/VIIs"/>
    <property type="match status" value="1"/>
</dbReference>
<dbReference type="InterPro" id="IPR051389">
    <property type="entry name" value="Cytochrome_c_oxidase_VIc"/>
</dbReference>
<dbReference type="InterPro" id="IPR034884">
    <property type="entry name" value="Cytochrome_c_oxidase_VIc/VIIs"/>
</dbReference>
<dbReference type="InterPro" id="IPR037169">
    <property type="entry name" value="Cytochrome_c_oxidase_VIc_sf"/>
</dbReference>
<dbReference type="PANTHER" id="PTHR48416">
    <property type="entry name" value="CYTOCHROME C OXIDASE SUBUNIT 6C"/>
    <property type="match status" value="1"/>
</dbReference>
<dbReference type="PANTHER" id="PTHR48416:SF1">
    <property type="entry name" value="CYTOCHROME C OXIDASE SUBUNIT 6C"/>
    <property type="match status" value="1"/>
</dbReference>
<dbReference type="Pfam" id="PF02937">
    <property type="entry name" value="COX6C"/>
    <property type="match status" value="1"/>
</dbReference>
<dbReference type="SUPFAM" id="SSF81415">
    <property type="entry name" value="Mitochondrial cytochrome c oxidase subunit VIc"/>
    <property type="match status" value="1"/>
</dbReference>
<sequence length="75" mass="8627">MAPEVLPKPQMRGLLARRLRFHMVTGFVLSLGVAALYKVGVADKRKKAYADFYRNYDAMKDFEEMRKAGIFQSVK</sequence>
<protein>
    <recommendedName>
        <fullName>Cytochrome c oxidase subunit 6C</fullName>
    </recommendedName>
    <alternativeName>
        <fullName>Cytochrome c oxidase polypeptide VIc</fullName>
    </alternativeName>
</protein>
<reference key="1">
    <citation type="submission" date="2003-02" db="EMBL/GenBank/DDBJ databases">
        <title>Co-evolution in cytochrome c oxidase: 9 of 13 subunits show accelerated rates of nonsynonymous substitution in anthropoid primates.</title>
        <authorList>
            <person name="Doan J.W."/>
            <person name="Schmidt T.R."/>
            <person name="Wildman D.E."/>
            <person name="Goldberg A."/>
            <person name="Huttemann M."/>
            <person name="Goodman M."/>
            <person name="Weiss M.L."/>
            <person name="Grossman L.I."/>
        </authorList>
    </citation>
    <scope>NUCLEOTIDE SEQUENCE [MRNA]</scope>
</reference>
<reference key="2">
    <citation type="journal article" date="2005" name="Proc. Natl. Acad. Sci. U.S.A.">
        <title>Rapid electrostatic evolution at the binding site for cytochrome c on cytochrome c oxidase in anthropoid primates.</title>
        <authorList>
            <person name="Schmidt T.R."/>
            <person name="Wildman D.E."/>
            <person name="Uddin M."/>
            <person name="Opazo J.C."/>
            <person name="Goodman M."/>
            <person name="Grossman L.I."/>
        </authorList>
    </citation>
    <scope>NUCLEOTIDE SEQUENCE [MRNA]</scope>
</reference>